<dbReference type="EMBL" id="CP000647">
    <property type="protein sequence ID" value="ABR78818.1"/>
    <property type="molecule type" value="Genomic_DNA"/>
</dbReference>
<dbReference type="RefSeq" id="WP_004105804.1">
    <property type="nucleotide sequence ID" value="NC_009648.1"/>
</dbReference>
<dbReference type="STRING" id="272620.KPN_03422"/>
<dbReference type="PaxDb" id="272620-KPN_03422"/>
<dbReference type="EnsemblBacteria" id="ABR78818">
    <property type="protein sequence ID" value="ABR78818"/>
    <property type="gene ID" value="KPN_03422"/>
</dbReference>
<dbReference type="KEGG" id="kpn:KPN_03422"/>
<dbReference type="HOGENOM" id="CLU_097887_1_1_6"/>
<dbReference type="Proteomes" id="UP000000265">
    <property type="component" value="Chromosome"/>
</dbReference>
<dbReference type="GO" id="GO:0005886">
    <property type="term" value="C:plasma membrane"/>
    <property type="evidence" value="ECO:0007669"/>
    <property type="project" value="UniProtKB-SubCell"/>
</dbReference>
<dbReference type="HAMAP" id="MF_00143">
    <property type="entry name" value="UPF0114"/>
    <property type="match status" value="1"/>
</dbReference>
<dbReference type="InterPro" id="IPR005134">
    <property type="entry name" value="UPF0114"/>
</dbReference>
<dbReference type="InterPro" id="IPR020761">
    <property type="entry name" value="UPF0114_bac"/>
</dbReference>
<dbReference type="NCBIfam" id="TIGR00645">
    <property type="entry name" value="HI0507"/>
    <property type="match status" value="1"/>
</dbReference>
<dbReference type="PANTHER" id="PTHR38596">
    <property type="entry name" value="UPF0114 PROTEIN YQHA"/>
    <property type="match status" value="1"/>
</dbReference>
<dbReference type="PANTHER" id="PTHR38596:SF1">
    <property type="entry name" value="UPF0114 PROTEIN YQHA"/>
    <property type="match status" value="1"/>
</dbReference>
<dbReference type="Pfam" id="PF03350">
    <property type="entry name" value="UPF0114"/>
    <property type="match status" value="1"/>
</dbReference>
<reference key="1">
    <citation type="submission" date="2006-09" db="EMBL/GenBank/DDBJ databases">
        <authorList>
            <consortium name="The Klebsiella pneumonia Genome Sequencing Project"/>
            <person name="McClelland M."/>
            <person name="Sanderson E.K."/>
            <person name="Spieth J."/>
            <person name="Clifton W.S."/>
            <person name="Latreille P."/>
            <person name="Sabo A."/>
            <person name="Pepin K."/>
            <person name="Bhonagiri V."/>
            <person name="Porwollik S."/>
            <person name="Ali J."/>
            <person name="Wilson R.K."/>
        </authorList>
    </citation>
    <scope>NUCLEOTIDE SEQUENCE [LARGE SCALE GENOMIC DNA]</scope>
    <source>
        <strain>ATCC 700721 / MGH 78578</strain>
    </source>
</reference>
<gene>
    <name type="ordered locus">KPN78578_33570</name>
    <name type="ORF">KPN_03422</name>
</gene>
<organism>
    <name type="scientific">Klebsiella pneumoniae subsp. pneumoniae (strain ATCC 700721 / MGH 78578)</name>
    <dbReference type="NCBI Taxonomy" id="272620"/>
    <lineage>
        <taxon>Bacteria</taxon>
        <taxon>Pseudomonadati</taxon>
        <taxon>Pseudomonadota</taxon>
        <taxon>Gammaproteobacteria</taxon>
        <taxon>Enterobacterales</taxon>
        <taxon>Enterobacteriaceae</taxon>
        <taxon>Klebsiella/Raoultella group</taxon>
        <taxon>Klebsiella</taxon>
        <taxon>Klebsiella pneumoniae complex</taxon>
    </lineage>
</organism>
<comment type="subcellular location">
    <subcellularLocation>
        <location evidence="1">Cell membrane</location>
        <topology evidence="1">Multi-pass membrane protein</topology>
    </subcellularLocation>
</comment>
<comment type="similarity">
    <text evidence="1">Belongs to the UPF0114 family.</text>
</comment>
<keyword id="KW-1003">Cell membrane</keyword>
<keyword id="KW-0472">Membrane</keyword>
<keyword id="KW-0812">Transmembrane</keyword>
<keyword id="KW-1133">Transmembrane helix</keyword>
<proteinExistence type="inferred from homology"/>
<accession>A6TDZ7</accession>
<protein>
    <recommendedName>
        <fullName evidence="1">UPF0114 protein KPN78578_33570</fullName>
    </recommendedName>
</protein>
<sequence length="164" mass="18637">MERFLENAMYASRWLLAPVYFGLSLGLIALTIKFFQEIFHILPHIFSVSESDMILTLLSLVDMTLVGGLLVMVMFSGYENFVSQLDINEGKEKLSWLGKMDATSLKNKVAASIVAISSIHLLRVFMDAKNVPDNKLMWYVIIHLTFVLSAFVMGYLDRLTKVKH</sequence>
<name>Y3357_KLEP7</name>
<evidence type="ECO:0000255" key="1">
    <source>
        <dbReference type="HAMAP-Rule" id="MF_00143"/>
    </source>
</evidence>
<feature type="chain" id="PRO_1000057938" description="UPF0114 protein KPN78578_33570">
    <location>
        <begin position="1"/>
        <end position="164"/>
    </location>
</feature>
<feature type="transmembrane region" description="Helical" evidence="1">
    <location>
        <begin position="15"/>
        <end position="35"/>
    </location>
</feature>
<feature type="transmembrane region" description="Helical" evidence="1">
    <location>
        <begin position="53"/>
        <end position="73"/>
    </location>
</feature>
<feature type="transmembrane region" description="Helical" evidence="1">
    <location>
        <begin position="109"/>
        <end position="126"/>
    </location>
</feature>
<feature type="transmembrane region" description="Helical" evidence="1">
    <location>
        <begin position="136"/>
        <end position="156"/>
    </location>
</feature>